<dbReference type="EC" id="3.4.23.42"/>
<dbReference type="EMBL" id="J05184">
    <property type="protein sequence ID" value="AAA72221.1"/>
    <property type="molecule type" value="Genomic_DNA"/>
</dbReference>
<dbReference type="EMBL" id="CP000077">
    <property type="protein sequence ID" value="AAY81020.1"/>
    <property type="status" value="ALT_INIT"/>
    <property type="molecule type" value="Genomic_DNA"/>
</dbReference>
<dbReference type="PIR" id="A35009">
    <property type="entry name" value="A35009"/>
</dbReference>
<dbReference type="RefSeq" id="WP_015385662.1">
    <property type="nucleotide sequence ID" value="NC_007181.1"/>
</dbReference>
<dbReference type="MEROPS" id="A05.001"/>
<dbReference type="GlyCosmos" id="P17118">
    <property type="glycosylation" value="10 sites, No reported glycans"/>
</dbReference>
<dbReference type="GeneID" id="14552206"/>
<dbReference type="GeneID" id="78442054"/>
<dbReference type="KEGG" id="sai:Saci_1714"/>
<dbReference type="PATRIC" id="fig|330779.12.peg.1651"/>
<dbReference type="eggNOG" id="arCOG03674">
    <property type="taxonomic scope" value="Archaea"/>
</dbReference>
<dbReference type="HOGENOM" id="CLU_815398_0_0_2"/>
<dbReference type="BRENDA" id="3.4.23.42">
    <property type="organism ID" value="6160"/>
</dbReference>
<dbReference type="Proteomes" id="UP000001018">
    <property type="component" value="Chromosome"/>
</dbReference>
<dbReference type="GO" id="GO:0005576">
    <property type="term" value="C:extracellular region"/>
    <property type="evidence" value="ECO:0007669"/>
    <property type="project" value="UniProtKB-SubCell"/>
</dbReference>
<dbReference type="GO" id="GO:0004190">
    <property type="term" value="F:aspartic-type endopeptidase activity"/>
    <property type="evidence" value="ECO:0007669"/>
    <property type="project" value="UniProtKB-KW"/>
</dbReference>
<dbReference type="GO" id="GO:0006508">
    <property type="term" value="P:proteolysis"/>
    <property type="evidence" value="ECO:0007669"/>
    <property type="project" value="UniProtKB-KW"/>
</dbReference>
<dbReference type="InterPro" id="IPR007981">
    <property type="entry name" value="Peptidase_A5"/>
</dbReference>
<dbReference type="Pfam" id="PF05317">
    <property type="entry name" value="Thermopsin"/>
    <property type="match status" value="1"/>
</dbReference>
<reference key="1">
    <citation type="journal article" date="1990" name="J. Biol. Chem.">
        <title>Purification, characterization, and gene cloning of thermopsin, a thermostable acid protease from Sulfolobus acidocaldarius.</title>
        <authorList>
            <person name="Lin X.-L."/>
            <person name="Tang J."/>
        </authorList>
    </citation>
    <scope>NUCLEOTIDE SEQUENCE [GENOMIC DNA]</scope>
    <scope>PROTEIN SEQUENCE OF 42-76</scope>
</reference>
<reference key="2">
    <citation type="journal article" date="2005" name="J. Bacteriol.">
        <title>The genome of Sulfolobus acidocaldarius, a model organism of the Crenarchaeota.</title>
        <authorList>
            <person name="Chen L."/>
            <person name="Bruegger K."/>
            <person name="Skovgaard M."/>
            <person name="Redder P."/>
            <person name="She Q."/>
            <person name="Torarinsson E."/>
            <person name="Greve B."/>
            <person name="Awayez M."/>
            <person name="Zibat A."/>
            <person name="Klenk H.-P."/>
            <person name="Garrett R.A."/>
        </authorList>
    </citation>
    <scope>NUCLEOTIDE SEQUENCE [LARGE SCALE GENOMIC DNA]</scope>
    <source>
        <strain>ATCC 33909 / DSM 639 / JCM 8929 / NBRC 15157 / NCIMB 11770</strain>
    </source>
</reference>
<protein>
    <recommendedName>
        <fullName>Thermopsin</fullName>
        <ecNumber>3.4.23.42</ecNumber>
    </recommendedName>
</protein>
<proteinExistence type="evidence at protein level"/>
<organism>
    <name type="scientific">Sulfolobus acidocaldarius (strain ATCC 33909 / DSM 639 / JCM 8929 / NBRC 15157 / NCIMB 11770)</name>
    <dbReference type="NCBI Taxonomy" id="330779"/>
    <lineage>
        <taxon>Archaea</taxon>
        <taxon>Thermoproteota</taxon>
        <taxon>Thermoprotei</taxon>
        <taxon>Sulfolobales</taxon>
        <taxon>Sulfolobaceae</taxon>
        <taxon>Sulfolobus</taxon>
    </lineage>
</organism>
<accession>P17118</accession>
<accession>Q4J861</accession>
<gene>
    <name type="primary">thpS</name>
    <name type="ordered locus">Saci_1714</name>
</gene>
<keyword id="KW-0064">Aspartyl protease</keyword>
<keyword id="KW-0903">Direct protein sequencing</keyword>
<keyword id="KW-0325">Glycoprotein</keyword>
<keyword id="KW-0378">Hydrolase</keyword>
<keyword id="KW-0645">Protease</keyword>
<keyword id="KW-1185">Reference proteome</keyword>
<keyword id="KW-0964">Secreted</keyword>
<keyword id="KW-0732">Signal</keyword>
<comment type="function">
    <text>May represent a new class of acid proteases. It digests proteins and peptides in acidic solution.</text>
</comment>
<comment type="catalytic activity">
    <reaction>
        <text>Specificity similar to pepsin A, prefers bulky hydrophobic side-chains on either side of the scissible bond.</text>
        <dbReference type="EC" id="3.4.23.42"/>
    </reaction>
</comment>
<comment type="biophysicochemical properties">
    <phDependence>
        <text>Optimum pH is 2.</text>
    </phDependence>
    <temperatureDependence>
        <text>Optimum temperature is 90 degrees Celsius. Thermostable.</text>
    </temperatureDependence>
</comment>
<comment type="subcellular location">
    <subcellularLocation>
        <location>Secreted</location>
    </subcellularLocation>
    <text>May be linked to cells by covalent linkages through some side chains.</text>
</comment>
<comment type="similarity">
    <text evidence="3">Belongs to the peptidase A5 family.</text>
</comment>
<comment type="sequence caution" evidence="3">
    <conflict type="erroneous initiation">
        <sequence resource="EMBL-CDS" id="AAY81020"/>
    </conflict>
</comment>
<sequence length="340" mass="37262">MNFKSICLIILLSALIIPYIPQNIYFFPHRNTTGATISSGLYVNPYLYYTSPPAPAGIASFGLYNYSGNVTPYVITTNEMLGYVNITSLLAYNREALRYGVDPYSATLQFNIVLSVNTSNGVYAYWLQDVGQFQTNKNSLTFIDNVWNLTGSLSTLSSSAITGNGQVASAGGGQTFYYDVGPSYTYSFPLSYIYIINMSYTSNAVYVWIGYEIIQIGQTEYGTVNYYDKITIYQPNIISASLMINGNNYTPNGLYYDAELVWGGGGNGAPTSFNSLNCTLGLYYISNGSITPVPSLYTFGADTAEAAYNVYTTMNNGVPIAYNGIENLTILTNNFSVILI</sequence>
<name>THPS_SULAC</name>
<feature type="signal peptide" evidence="1">
    <location>
        <begin position="1"/>
        <end position="28"/>
    </location>
</feature>
<feature type="propeptide" id="PRO_0000028499" evidence="2">
    <location>
        <begin position="29"/>
        <end position="41"/>
    </location>
</feature>
<feature type="chain" id="PRO_0000028500" description="Thermopsin">
    <location>
        <begin position="42"/>
        <end position="340"/>
    </location>
</feature>
<feature type="glycosylation site" description="N-linked (GlcNAc...) asparagine" evidence="1">
    <location>
        <position position="31"/>
    </location>
</feature>
<feature type="glycosylation site" description="N-linked (GlcNAc...) asparagine" evidence="3">
    <location>
        <position position="65"/>
    </location>
</feature>
<feature type="glycosylation site" description="N-linked (GlcNAc...) asparagine" evidence="1">
    <location>
        <position position="85"/>
    </location>
</feature>
<feature type="glycosylation site" description="N-linked (GlcNAc...) asparagine" evidence="1">
    <location>
        <position position="117"/>
    </location>
</feature>
<feature type="glycosylation site" description="N-linked (GlcNAc...) asparagine" evidence="1">
    <location>
        <position position="148"/>
    </location>
</feature>
<feature type="glycosylation site" description="N-linked (GlcNAc...) asparagine" evidence="1">
    <location>
        <position position="197"/>
    </location>
</feature>
<feature type="glycosylation site" description="N-linked (GlcNAc...) asparagine" evidence="1">
    <location>
        <position position="277"/>
    </location>
</feature>
<feature type="glycosylation site" description="N-linked (GlcNAc...) asparagine" evidence="1">
    <location>
        <position position="287"/>
    </location>
</feature>
<feature type="glycosylation site" description="N-linked (GlcNAc...) asparagine" evidence="1">
    <location>
        <position position="327"/>
    </location>
</feature>
<feature type="glycosylation site" description="N-linked (GlcNAc...) asparagine" evidence="1">
    <location>
        <position position="334"/>
    </location>
</feature>
<evidence type="ECO:0000255" key="1"/>
<evidence type="ECO:0000269" key="2">
    <source>
    </source>
</evidence>
<evidence type="ECO:0000305" key="3"/>